<accession>A6UWT0</accession>
<organism>
    <name type="scientific">Methanococcus aeolicus (strain ATCC BAA-1280 / DSM 17508 / OCM 812 / Nankai-3)</name>
    <dbReference type="NCBI Taxonomy" id="419665"/>
    <lineage>
        <taxon>Archaea</taxon>
        <taxon>Methanobacteriati</taxon>
        <taxon>Methanobacteriota</taxon>
        <taxon>Methanomada group</taxon>
        <taxon>Methanococci</taxon>
        <taxon>Methanococcales</taxon>
        <taxon>Methanococcaceae</taxon>
        <taxon>Methanococcus</taxon>
    </lineage>
</organism>
<sequence length="479" mass="56018">MKIYNTASKNKETFKTINNKKLIKMYVCGPTVYDHAHLGHGRTYVAFDIIRRYLEHKNYIVQLIINFTDIDDKIINRANEQGTTIKELSDKFINSFLEDMEKLNVKPALIYPRVSEHINEIIEFIKVLEKKGYAYATADGVYFDTSKYEKYGELRKINIKEETSEQKNININKKNQRDFALWKFAKPDEPKWDSPWGEGRPAWHIECSAMSLKYLGDNFDIHGGGCDLIFPHHENEKAQSECYTDKKWVNYWIHTGFVMVNNEKMSKSLGNFSTLKDLFEKYSAELIRFFLLERHYSSPLDYTEDAINHSKNNLDKLYNTIQNITVAFRNSEIKYKLNEIDKNTIETIHNCTEKFYTAMDDNFNTAQALKYVFEVSTAINKYINNYANSDELPNYSIILKSYEFFKMVGEIFGIFGSSTINTATNTNIAEENLINILMELRADLKKEKNYNLSDKIRDKLKEMDIILEDSPKGTIWKKA</sequence>
<keyword id="KW-0030">Aminoacyl-tRNA synthetase</keyword>
<keyword id="KW-0067">ATP-binding</keyword>
<keyword id="KW-0963">Cytoplasm</keyword>
<keyword id="KW-0436">Ligase</keyword>
<keyword id="KW-0479">Metal-binding</keyword>
<keyword id="KW-0547">Nucleotide-binding</keyword>
<keyword id="KW-0648">Protein biosynthesis</keyword>
<keyword id="KW-0862">Zinc</keyword>
<reference key="1">
    <citation type="submission" date="2007-06" db="EMBL/GenBank/DDBJ databases">
        <title>Complete sequence of Methanococcus aeolicus Nankai-3.</title>
        <authorList>
            <consortium name="US DOE Joint Genome Institute"/>
            <person name="Copeland A."/>
            <person name="Lucas S."/>
            <person name="Lapidus A."/>
            <person name="Barry K."/>
            <person name="Glavina del Rio T."/>
            <person name="Dalin E."/>
            <person name="Tice H."/>
            <person name="Pitluck S."/>
            <person name="Chain P."/>
            <person name="Malfatti S."/>
            <person name="Shin M."/>
            <person name="Vergez L."/>
            <person name="Schmutz J."/>
            <person name="Larimer F."/>
            <person name="Land M."/>
            <person name="Hauser L."/>
            <person name="Kyrpides N."/>
            <person name="Lykidis A."/>
            <person name="Sieprawska-Lupa M."/>
            <person name="Whitman W.B."/>
            <person name="Richardson P."/>
        </authorList>
    </citation>
    <scope>NUCLEOTIDE SEQUENCE [LARGE SCALE GENOMIC DNA]</scope>
    <source>
        <strain>ATCC BAA-1280 / DSM 17508 / OCM 812 / Nankai-3</strain>
    </source>
</reference>
<protein>
    <recommendedName>
        <fullName evidence="1">Cysteine--tRNA ligase</fullName>
        <ecNumber evidence="1">6.1.1.16</ecNumber>
    </recommendedName>
    <alternativeName>
        <fullName evidence="1">Cysteinyl-tRNA synthetase</fullName>
        <shortName evidence="1">CysRS</shortName>
    </alternativeName>
</protein>
<name>SYC_META3</name>
<dbReference type="EC" id="6.1.1.16" evidence="1"/>
<dbReference type="EMBL" id="CP000743">
    <property type="protein sequence ID" value="ABR56952.1"/>
    <property type="molecule type" value="Genomic_DNA"/>
</dbReference>
<dbReference type="RefSeq" id="WP_011974084.1">
    <property type="nucleotide sequence ID" value="NC_009635.1"/>
</dbReference>
<dbReference type="SMR" id="A6UWT0"/>
<dbReference type="STRING" id="419665.Maeo_1376"/>
<dbReference type="GeneID" id="5327234"/>
<dbReference type="GeneID" id="75304855"/>
<dbReference type="KEGG" id="mae:Maeo_1376"/>
<dbReference type="eggNOG" id="arCOG00486">
    <property type="taxonomic scope" value="Archaea"/>
</dbReference>
<dbReference type="HOGENOM" id="CLU_013528_0_1_2"/>
<dbReference type="Proteomes" id="UP000001106">
    <property type="component" value="Chromosome"/>
</dbReference>
<dbReference type="GO" id="GO:0005737">
    <property type="term" value="C:cytoplasm"/>
    <property type="evidence" value="ECO:0007669"/>
    <property type="project" value="UniProtKB-SubCell"/>
</dbReference>
<dbReference type="GO" id="GO:0005524">
    <property type="term" value="F:ATP binding"/>
    <property type="evidence" value="ECO:0007669"/>
    <property type="project" value="UniProtKB-UniRule"/>
</dbReference>
<dbReference type="GO" id="GO:0004817">
    <property type="term" value="F:cysteine-tRNA ligase activity"/>
    <property type="evidence" value="ECO:0007669"/>
    <property type="project" value="UniProtKB-UniRule"/>
</dbReference>
<dbReference type="GO" id="GO:0008270">
    <property type="term" value="F:zinc ion binding"/>
    <property type="evidence" value="ECO:0007669"/>
    <property type="project" value="UniProtKB-UniRule"/>
</dbReference>
<dbReference type="GO" id="GO:0006423">
    <property type="term" value="P:cysteinyl-tRNA aminoacylation"/>
    <property type="evidence" value="ECO:0007669"/>
    <property type="project" value="UniProtKB-UniRule"/>
</dbReference>
<dbReference type="CDD" id="cd00672">
    <property type="entry name" value="CysRS_core"/>
    <property type="match status" value="1"/>
</dbReference>
<dbReference type="FunFam" id="3.40.50.620:FF:000130">
    <property type="entry name" value="Cysteine--tRNA ligase"/>
    <property type="match status" value="1"/>
</dbReference>
<dbReference type="Gene3D" id="1.20.120.1910">
    <property type="entry name" value="Cysteine-tRNA ligase, C-terminal anti-codon recognition domain"/>
    <property type="match status" value="1"/>
</dbReference>
<dbReference type="Gene3D" id="3.40.50.620">
    <property type="entry name" value="HUPs"/>
    <property type="match status" value="1"/>
</dbReference>
<dbReference type="HAMAP" id="MF_00041">
    <property type="entry name" value="Cys_tRNA_synth"/>
    <property type="match status" value="1"/>
</dbReference>
<dbReference type="InterPro" id="IPR015803">
    <property type="entry name" value="Cys-tRNA-ligase"/>
</dbReference>
<dbReference type="InterPro" id="IPR015273">
    <property type="entry name" value="Cys-tRNA-synt_Ia_DALR"/>
</dbReference>
<dbReference type="InterPro" id="IPR024909">
    <property type="entry name" value="Cys-tRNA/MSH_ligase"/>
</dbReference>
<dbReference type="InterPro" id="IPR014729">
    <property type="entry name" value="Rossmann-like_a/b/a_fold"/>
</dbReference>
<dbReference type="InterPro" id="IPR032678">
    <property type="entry name" value="tRNA-synt_1_cat_dom"/>
</dbReference>
<dbReference type="InterPro" id="IPR009080">
    <property type="entry name" value="tRNAsynth_Ia_anticodon-bd"/>
</dbReference>
<dbReference type="NCBIfam" id="TIGR00435">
    <property type="entry name" value="cysS"/>
    <property type="match status" value="1"/>
</dbReference>
<dbReference type="PANTHER" id="PTHR10890:SF3">
    <property type="entry name" value="CYSTEINE--TRNA LIGASE, CYTOPLASMIC"/>
    <property type="match status" value="1"/>
</dbReference>
<dbReference type="PANTHER" id="PTHR10890">
    <property type="entry name" value="CYSTEINYL-TRNA SYNTHETASE"/>
    <property type="match status" value="1"/>
</dbReference>
<dbReference type="Pfam" id="PF09190">
    <property type="entry name" value="DALR_2"/>
    <property type="match status" value="1"/>
</dbReference>
<dbReference type="Pfam" id="PF01406">
    <property type="entry name" value="tRNA-synt_1e"/>
    <property type="match status" value="1"/>
</dbReference>
<dbReference type="PRINTS" id="PR00983">
    <property type="entry name" value="TRNASYNTHCYS"/>
</dbReference>
<dbReference type="SMART" id="SM00840">
    <property type="entry name" value="DALR_2"/>
    <property type="match status" value="1"/>
</dbReference>
<dbReference type="SUPFAM" id="SSF47323">
    <property type="entry name" value="Anticodon-binding domain of a subclass of class I aminoacyl-tRNA synthetases"/>
    <property type="match status" value="1"/>
</dbReference>
<dbReference type="SUPFAM" id="SSF52374">
    <property type="entry name" value="Nucleotidylyl transferase"/>
    <property type="match status" value="1"/>
</dbReference>
<proteinExistence type="inferred from homology"/>
<feature type="chain" id="PRO_0000332921" description="Cysteine--tRNA ligase">
    <location>
        <begin position="1"/>
        <end position="479"/>
    </location>
</feature>
<feature type="short sequence motif" description="'HIGH' region">
    <location>
        <begin position="30"/>
        <end position="40"/>
    </location>
</feature>
<feature type="short sequence motif" description="'KMSKS' region">
    <location>
        <begin position="264"/>
        <end position="268"/>
    </location>
</feature>
<feature type="binding site" evidence="1">
    <location>
        <position position="28"/>
    </location>
    <ligand>
        <name>Zn(2+)</name>
        <dbReference type="ChEBI" id="CHEBI:29105"/>
    </ligand>
</feature>
<feature type="binding site" evidence="1">
    <location>
        <position position="207"/>
    </location>
    <ligand>
        <name>Zn(2+)</name>
        <dbReference type="ChEBI" id="CHEBI:29105"/>
    </ligand>
</feature>
<feature type="binding site" evidence="1">
    <location>
        <position position="232"/>
    </location>
    <ligand>
        <name>Zn(2+)</name>
        <dbReference type="ChEBI" id="CHEBI:29105"/>
    </ligand>
</feature>
<feature type="binding site" evidence="1">
    <location>
        <position position="236"/>
    </location>
    <ligand>
        <name>Zn(2+)</name>
        <dbReference type="ChEBI" id="CHEBI:29105"/>
    </ligand>
</feature>
<feature type="binding site" evidence="1">
    <location>
        <position position="267"/>
    </location>
    <ligand>
        <name>ATP</name>
        <dbReference type="ChEBI" id="CHEBI:30616"/>
    </ligand>
</feature>
<comment type="catalytic activity">
    <reaction evidence="1">
        <text>tRNA(Cys) + L-cysteine + ATP = L-cysteinyl-tRNA(Cys) + AMP + diphosphate</text>
        <dbReference type="Rhea" id="RHEA:17773"/>
        <dbReference type="Rhea" id="RHEA-COMP:9661"/>
        <dbReference type="Rhea" id="RHEA-COMP:9679"/>
        <dbReference type="ChEBI" id="CHEBI:30616"/>
        <dbReference type="ChEBI" id="CHEBI:33019"/>
        <dbReference type="ChEBI" id="CHEBI:35235"/>
        <dbReference type="ChEBI" id="CHEBI:78442"/>
        <dbReference type="ChEBI" id="CHEBI:78517"/>
        <dbReference type="ChEBI" id="CHEBI:456215"/>
        <dbReference type="EC" id="6.1.1.16"/>
    </reaction>
</comment>
<comment type="cofactor">
    <cofactor evidence="1">
        <name>Zn(2+)</name>
        <dbReference type="ChEBI" id="CHEBI:29105"/>
    </cofactor>
    <text evidence="1">Binds 1 zinc ion per subunit.</text>
</comment>
<comment type="subcellular location">
    <subcellularLocation>
        <location evidence="1">Cytoplasm</location>
    </subcellularLocation>
</comment>
<comment type="similarity">
    <text evidence="1">Belongs to the class-I aminoacyl-tRNA synthetase family.</text>
</comment>
<evidence type="ECO:0000255" key="1">
    <source>
        <dbReference type="HAMAP-Rule" id="MF_00041"/>
    </source>
</evidence>
<gene>
    <name evidence="1" type="primary">cysS</name>
    <name type="ordered locus">Maeo_1376</name>
</gene>